<accession>A9M1J1</accession>
<protein>
    <recommendedName>
        <fullName evidence="1">Formate--tetrahydrofolate ligase</fullName>
        <ecNumber evidence="1">6.3.4.3</ecNumber>
    </recommendedName>
    <alternativeName>
        <fullName evidence="1">Formyltetrahydrofolate synthetase</fullName>
        <shortName evidence="1">FHS</shortName>
        <shortName evidence="1">FTHFS</shortName>
    </alternativeName>
</protein>
<dbReference type="EC" id="6.3.4.3" evidence="1"/>
<dbReference type="EMBL" id="CP000381">
    <property type="protein sequence ID" value="ABX72589.1"/>
    <property type="molecule type" value="Genomic_DNA"/>
</dbReference>
<dbReference type="RefSeq" id="WP_012221285.1">
    <property type="nucleotide sequence ID" value="NC_010120.1"/>
</dbReference>
<dbReference type="SMR" id="A9M1J1"/>
<dbReference type="KEGG" id="nmn:NMCC_0383"/>
<dbReference type="HOGENOM" id="CLU_003601_3_3_4"/>
<dbReference type="UniPathway" id="UPA00193"/>
<dbReference type="Proteomes" id="UP000001177">
    <property type="component" value="Chromosome"/>
</dbReference>
<dbReference type="GO" id="GO:0005524">
    <property type="term" value="F:ATP binding"/>
    <property type="evidence" value="ECO:0007669"/>
    <property type="project" value="UniProtKB-UniRule"/>
</dbReference>
<dbReference type="GO" id="GO:0004329">
    <property type="term" value="F:formate-tetrahydrofolate ligase activity"/>
    <property type="evidence" value="ECO:0007669"/>
    <property type="project" value="UniProtKB-UniRule"/>
</dbReference>
<dbReference type="GO" id="GO:0035999">
    <property type="term" value="P:tetrahydrofolate interconversion"/>
    <property type="evidence" value="ECO:0007669"/>
    <property type="project" value="UniProtKB-UniRule"/>
</dbReference>
<dbReference type="CDD" id="cd00477">
    <property type="entry name" value="FTHFS"/>
    <property type="match status" value="1"/>
</dbReference>
<dbReference type="FunFam" id="3.30.1510.10:FF:000001">
    <property type="entry name" value="Formate--tetrahydrofolate ligase"/>
    <property type="match status" value="1"/>
</dbReference>
<dbReference type="FunFam" id="3.10.410.10:FF:000001">
    <property type="entry name" value="Putative formate--tetrahydrofolate ligase"/>
    <property type="match status" value="1"/>
</dbReference>
<dbReference type="Gene3D" id="3.30.1510.10">
    <property type="entry name" value="Domain 2, N(10)-formyltetrahydrofolate synthetase"/>
    <property type="match status" value="1"/>
</dbReference>
<dbReference type="Gene3D" id="3.10.410.10">
    <property type="entry name" value="Formyltetrahydrofolate synthetase, domain 3"/>
    <property type="match status" value="1"/>
</dbReference>
<dbReference type="Gene3D" id="3.40.50.300">
    <property type="entry name" value="P-loop containing nucleotide triphosphate hydrolases"/>
    <property type="match status" value="1"/>
</dbReference>
<dbReference type="HAMAP" id="MF_01543">
    <property type="entry name" value="FTHFS"/>
    <property type="match status" value="1"/>
</dbReference>
<dbReference type="InterPro" id="IPR000559">
    <property type="entry name" value="Formate_THF_ligase"/>
</dbReference>
<dbReference type="InterPro" id="IPR020628">
    <property type="entry name" value="Formate_THF_ligase_CS"/>
</dbReference>
<dbReference type="InterPro" id="IPR027417">
    <property type="entry name" value="P-loop_NTPase"/>
</dbReference>
<dbReference type="NCBIfam" id="NF010030">
    <property type="entry name" value="PRK13505.1"/>
    <property type="match status" value="1"/>
</dbReference>
<dbReference type="Pfam" id="PF01268">
    <property type="entry name" value="FTHFS"/>
    <property type="match status" value="1"/>
</dbReference>
<dbReference type="SUPFAM" id="SSF52540">
    <property type="entry name" value="P-loop containing nucleoside triphosphate hydrolases"/>
    <property type="match status" value="1"/>
</dbReference>
<dbReference type="PROSITE" id="PS00721">
    <property type="entry name" value="FTHFS_1"/>
    <property type="match status" value="1"/>
</dbReference>
<dbReference type="PROSITE" id="PS00722">
    <property type="entry name" value="FTHFS_2"/>
    <property type="match status" value="1"/>
</dbReference>
<evidence type="ECO:0000255" key="1">
    <source>
        <dbReference type="HAMAP-Rule" id="MF_01543"/>
    </source>
</evidence>
<gene>
    <name evidence="1" type="primary">fhs</name>
    <name type="ordered locus">NMCC_0383</name>
</gene>
<name>FTHS_NEIM0</name>
<organism>
    <name type="scientific">Neisseria meningitidis serogroup C (strain 053442)</name>
    <dbReference type="NCBI Taxonomy" id="374833"/>
    <lineage>
        <taxon>Bacteria</taxon>
        <taxon>Pseudomonadati</taxon>
        <taxon>Pseudomonadota</taxon>
        <taxon>Betaproteobacteria</taxon>
        <taxon>Neisseriales</taxon>
        <taxon>Neisseriaceae</taxon>
        <taxon>Neisseria</taxon>
    </lineage>
</organism>
<comment type="catalytic activity">
    <reaction evidence="1">
        <text>(6S)-5,6,7,8-tetrahydrofolate + formate + ATP = (6R)-10-formyltetrahydrofolate + ADP + phosphate</text>
        <dbReference type="Rhea" id="RHEA:20221"/>
        <dbReference type="ChEBI" id="CHEBI:15740"/>
        <dbReference type="ChEBI" id="CHEBI:30616"/>
        <dbReference type="ChEBI" id="CHEBI:43474"/>
        <dbReference type="ChEBI" id="CHEBI:57453"/>
        <dbReference type="ChEBI" id="CHEBI:195366"/>
        <dbReference type="ChEBI" id="CHEBI:456216"/>
        <dbReference type="EC" id="6.3.4.3"/>
    </reaction>
</comment>
<comment type="pathway">
    <text evidence="1">One-carbon metabolism; tetrahydrofolate interconversion.</text>
</comment>
<comment type="similarity">
    <text evidence="1">Belongs to the formate--tetrahydrofolate ligase family.</text>
</comment>
<reference key="1">
    <citation type="journal article" date="2008" name="Genomics">
        <title>Characterization of ST-4821 complex, a unique Neisseria meningitidis clone.</title>
        <authorList>
            <person name="Peng J."/>
            <person name="Yang L."/>
            <person name="Yang F."/>
            <person name="Yang J."/>
            <person name="Yan Y."/>
            <person name="Nie H."/>
            <person name="Zhang X."/>
            <person name="Xiong Z."/>
            <person name="Jiang Y."/>
            <person name="Cheng F."/>
            <person name="Xu X."/>
            <person name="Chen S."/>
            <person name="Sun L."/>
            <person name="Li W."/>
            <person name="Shen Y."/>
            <person name="Shao Z."/>
            <person name="Liang X."/>
            <person name="Xu J."/>
            <person name="Jin Q."/>
        </authorList>
    </citation>
    <scope>NUCLEOTIDE SEQUENCE [LARGE SCALE GENOMIC DNA]</scope>
    <source>
        <strain>053442</strain>
    </source>
</reference>
<proteinExistence type="inferred from homology"/>
<feature type="chain" id="PRO_1000087652" description="Formate--tetrahydrofolate ligase">
    <location>
        <begin position="1"/>
        <end position="558"/>
    </location>
</feature>
<feature type="binding site" evidence="1">
    <location>
        <begin position="66"/>
        <end position="73"/>
    </location>
    <ligand>
        <name>ATP</name>
        <dbReference type="ChEBI" id="CHEBI:30616"/>
    </ligand>
</feature>
<sequence>MSFKTDAEIAQSSTMRPIGEIAAKLGLNADNIEPYGHYKAKINPAEAFKLPQKQGRLILVTAINPTPAGEGKTTVTIGLADALRHIGKDSVIALREPSLGPVFGVKGGAAGGGYAQVLPMEDINLHFTGDFHAIGAANNLLAAMLDNHIYQGNELDIDPKRVLWRRVVDMNDRQLRNIIDGMGKPVDGVMRPDGFDITVASEVMAVFCLAKDISDLKERLGNILVAYAKDGSPVYAKDLKANGAMAALLKDAIKPNLVQTIEGTPAFVHGGPFANIAHGCNSVTATRLAKHLADYAVTEAGFGADLGAEKFCDIKCRLAGLKPDAAVVVATVRALKYNGGVERANLGEENLDALEKGLPNLLKHISNLKNVFGLPVVVALNRFVSDSDAELAMIEKACAEHGVEVSLTEVWGKGGAGGADLARKVVNAIESQTNNFGFAYDVELGIKDKIRAIAQKVYGAEDVDFSAEASAEIASLEKLGLDKMPICMAKTQYSLSDNAKLLGCPEGFRIAVRGITVSAGAGFIVALCGNMMKMPGLPKVPAAEKIDVDEHGVIHGLF</sequence>
<keyword id="KW-0067">ATP-binding</keyword>
<keyword id="KW-0436">Ligase</keyword>
<keyword id="KW-0547">Nucleotide-binding</keyword>
<keyword id="KW-0554">One-carbon metabolism</keyword>